<evidence type="ECO:0000250" key="1"/>
<evidence type="ECO:0000305" key="2"/>
<comment type="function">
    <text evidence="1">Component of the NuA4 histone acetyltransferase complex which is involved in transcriptional activation of selected genes principally by acetylation of nucleosomal histone H4 and H2A. The NuA4 complex is also involved in DNA repair (By similarity).</text>
</comment>
<comment type="subunit">
    <text evidence="1">Component of the NuA4 histone acetyltransferase complex.</text>
</comment>
<comment type="subcellular location">
    <subcellularLocation>
        <location evidence="1">Nucleus</location>
    </subcellularLocation>
</comment>
<comment type="similarity">
    <text evidence="2">Belongs to the EAF5 family.</text>
</comment>
<comment type="sequence caution" evidence="2">
    <conflict type="erroneous initiation">
        <sequence resource="EMBL-CDS" id="AAS52633"/>
    </conflict>
</comment>
<proteinExistence type="inferred from homology"/>
<gene>
    <name type="primary">EAF5</name>
    <name type="ordered locus">AEL052W</name>
</gene>
<feature type="chain" id="PRO_0000086889" description="Chromatin modification-related protein EAF5">
    <location>
        <begin position="1"/>
        <end position="221"/>
    </location>
</feature>
<sequence>MNISKVLILETLYELLLNGQTNRVSLVRLQADVNDHPMTKQLAHQWQTLKINDILDVIKLLFPKQTSLSDGQIIFYNLQIVEIRDTLLDVVRECQDTLVKDVKQLEQQYQAIKSHDDMKIRRERIMGMYRDTILAKLQSFQHFHRLYSKLDPSPVVRDMMDLERIKATSIENLSHLQHILQKCVTDSVMTTKAGSDRYREIILSQGELDDTVKFVRYAMDN</sequence>
<dbReference type="EMBL" id="AE016818">
    <property type="protein sequence ID" value="AAS52633.1"/>
    <property type="status" value="ALT_INIT"/>
    <property type="molecule type" value="Genomic_DNA"/>
</dbReference>
<dbReference type="RefSeq" id="NP_984809.1">
    <property type="nucleotide sequence ID" value="NM_210163.1"/>
</dbReference>
<dbReference type="SMR" id="Q757R4"/>
<dbReference type="FunCoup" id="Q757R4">
    <property type="interactions" value="135"/>
</dbReference>
<dbReference type="STRING" id="284811.Q757R4"/>
<dbReference type="GeneID" id="4621002"/>
<dbReference type="KEGG" id="ago:AGOS_AEL052W"/>
<dbReference type="eggNOG" id="ENOG502S0AH">
    <property type="taxonomic scope" value="Eukaryota"/>
</dbReference>
<dbReference type="InParanoid" id="Q757R4"/>
<dbReference type="OrthoDB" id="4029425at2759"/>
<dbReference type="Proteomes" id="UP000000591">
    <property type="component" value="Chromosome V"/>
</dbReference>
<dbReference type="GO" id="GO:0005634">
    <property type="term" value="C:nucleus"/>
    <property type="evidence" value="ECO:0007669"/>
    <property type="project" value="UniProtKB-SubCell"/>
</dbReference>
<dbReference type="GO" id="GO:0006325">
    <property type="term" value="P:chromatin organization"/>
    <property type="evidence" value="ECO:0007669"/>
    <property type="project" value="UniProtKB-KW"/>
</dbReference>
<dbReference type="GO" id="GO:0006281">
    <property type="term" value="P:DNA repair"/>
    <property type="evidence" value="ECO:0007669"/>
    <property type="project" value="UniProtKB-KW"/>
</dbReference>
<dbReference type="InterPro" id="IPR026226">
    <property type="entry name" value="EAF5"/>
</dbReference>
<dbReference type="PRINTS" id="PR02067">
    <property type="entry name" value="PROTEINEAF5"/>
</dbReference>
<keyword id="KW-0156">Chromatin regulator</keyword>
<keyword id="KW-0227">DNA damage</keyword>
<keyword id="KW-0234">DNA repair</keyword>
<keyword id="KW-0539">Nucleus</keyword>
<keyword id="KW-1185">Reference proteome</keyword>
<keyword id="KW-0804">Transcription</keyword>
<keyword id="KW-0805">Transcription regulation</keyword>
<protein>
    <recommendedName>
        <fullName>Chromatin modification-related protein EAF5</fullName>
    </recommendedName>
</protein>
<reference key="1">
    <citation type="journal article" date="2004" name="Science">
        <title>The Ashbya gossypii genome as a tool for mapping the ancient Saccharomyces cerevisiae genome.</title>
        <authorList>
            <person name="Dietrich F.S."/>
            <person name="Voegeli S."/>
            <person name="Brachat S."/>
            <person name="Lerch A."/>
            <person name="Gates K."/>
            <person name="Steiner S."/>
            <person name="Mohr C."/>
            <person name="Poehlmann R."/>
            <person name="Luedi P."/>
            <person name="Choi S."/>
            <person name="Wing R.A."/>
            <person name="Flavier A."/>
            <person name="Gaffney T.D."/>
            <person name="Philippsen P."/>
        </authorList>
    </citation>
    <scope>NUCLEOTIDE SEQUENCE [LARGE SCALE GENOMIC DNA]</scope>
    <source>
        <strain>ATCC 10895 / CBS 109.51 / FGSC 9923 / NRRL Y-1056</strain>
    </source>
</reference>
<reference key="2">
    <citation type="journal article" date="2013" name="G3 (Bethesda)">
        <title>Genomes of Ashbya fungi isolated from insects reveal four mating-type loci, numerous translocations, lack of transposons, and distinct gene duplications.</title>
        <authorList>
            <person name="Dietrich F.S."/>
            <person name="Voegeli S."/>
            <person name="Kuo S."/>
            <person name="Philippsen P."/>
        </authorList>
    </citation>
    <scope>GENOME REANNOTATION</scope>
    <source>
        <strain>ATCC 10895 / CBS 109.51 / FGSC 9923 / NRRL Y-1056</strain>
    </source>
</reference>
<organism>
    <name type="scientific">Eremothecium gossypii (strain ATCC 10895 / CBS 109.51 / FGSC 9923 / NRRL Y-1056)</name>
    <name type="common">Yeast</name>
    <name type="synonym">Ashbya gossypii</name>
    <dbReference type="NCBI Taxonomy" id="284811"/>
    <lineage>
        <taxon>Eukaryota</taxon>
        <taxon>Fungi</taxon>
        <taxon>Dikarya</taxon>
        <taxon>Ascomycota</taxon>
        <taxon>Saccharomycotina</taxon>
        <taxon>Saccharomycetes</taxon>
        <taxon>Saccharomycetales</taxon>
        <taxon>Saccharomycetaceae</taxon>
        <taxon>Eremothecium</taxon>
    </lineage>
</organism>
<name>EAF5_EREGS</name>
<accession>Q757R4</accession>